<feature type="chain" id="PRO_0000327013" description="Protoheme IX farnesyltransferase">
    <location>
        <begin position="1"/>
        <end position="298"/>
    </location>
</feature>
<feature type="transmembrane region" description="Helical" evidence="1">
    <location>
        <begin position="23"/>
        <end position="43"/>
    </location>
</feature>
<feature type="transmembrane region" description="Helical" evidence="1">
    <location>
        <begin position="49"/>
        <end position="69"/>
    </location>
</feature>
<feature type="transmembrane region" description="Helical" evidence="1">
    <location>
        <begin position="95"/>
        <end position="115"/>
    </location>
</feature>
<feature type="transmembrane region" description="Helical" evidence="1">
    <location>
        <begin position="117"/>
        <end position="137"/>
    </location>
</feature>
<feature type="transmembrane region" description="Helical" evidence="1">
    <location>
        <begin position="144"/>
        <end position="164"/>
    </location>
</feature>
<feature type="transmembrane region" description="Helical" evidence="1">
    <location>
        <begin position="171"/>
        <end position="191"/>
    </location>
</feature>
<feature type="transmembrane region" description="Helical" evidence="1">
    <location>
        <begin position="234"/>
        <end position="254"/>
    </location>
</feature>
<feature type="transmembrane region" description="Helical" evidence="1">
    <location>
        <begin position="276"/>
        <end position="296"/>
    </location>
</feature>
<evidence type="ECO:0000255" key="1">
    <source>
        <dbReference type="HAMAP-Rule" id="MF_00154"/>
    </source>
</evidence>
<keyword id="KW-0997">Cell inner membrane</keyword>
<keyword id="KW-1003">Cell membrane</keyword>
<keyword id="KW-0350">Heme biosynthesis</keyword>
<keyword id="KW-0472">Membrane</keyword>
<keyword id="KW-1185">Reference proteome</keyword>
<keyword id="KW-0808">Transferase</keyword>
<keyword id="KW-0812">Transmembrane</keyword>
<keyword id="KW-1133">Transmembrane helix</keyword>
<reference key="1">
    <citation type="journal article" date="2006" name="J. Bacteriol.">
        <title>Comparison of the genome sequence of the poultry pathogen Bordetella avium with those of B. bronchiseptica, B. pertussis, and B. parapertussis reveals extensive diversity in surface structures associated with host interaction.</title>
        <authorList>
            <person name="Sebaihia M."/>
            <person name="Preston A."/>
            <person name="Maskell D.J."/>
            <person name="Kuzmiak H."/>
            <person name="Connell T.D."/>
            <person name="King N.D."/>
            <person name="Orndorff P.E."/>
            <person name="Miyamoto D.M."/>
            <person name="Thomson N.R."/>
            <person name="Harris D."/>
            <person name="Goble A."/>
            <person name="Lord A."/>
            <person name="Murphy L."/>
            <person name="Quail M.A."/>
            <person name="Rutter S."/>
            <person name="Squares R."/>
            <person name="Squares S."/>
            <person name="Woodward J."/>
            <person name="Parkhill J."/>
            <person name="Temple L.M."/>
        </authorList>
    </citation>
    <scope>NUCLEOTIDE SEQUENCE [LARGE SCALE GENOMIC DNA]</scope>
    <source>
        <strain>197N</strain>
    </source>
</reference>
<name>COXX_BORA1</name>
<dbReference type="EC" id="2.5.1.141" evidence="1"/>
<dbReference type="EMBL" id="AM167904">
    <property type="protein sequence ID" value="CAJ50890.1"/>
    <property type="molecule type" value="Genomic_DNA"/>
</dbReference>
<dbReference type="RefSeq" id="WP_012418917.1">
    <property type="nucleotide sequence ID" value="NC_010645.1"/>
</dbReference>
<dbReference type="SMR" id="Q2KTX0"/>
<dbReference type="STRING" id="360910.BAV3280"/>
<dbReference type="GeneID" id="92933461"/>
<dbReference type="KEGG" id="bav:BAV3280"/>
<dbReference type="eggNOG" id="COG0109">
    <property type="taxonomic scope" value="Bacteria"/>
</dbReference>
<dbReference type="HOGENOM" id="CLU_029631_0_2_4"/>
<dbReference type="OrthoDB" id="9814417at2"/>
<dbReference type="UniPathway" id="UPA00834">
    <property type="reaction ID" value="UER00712"/>
</dbReference>
<dbReference type="Proteomes" id="UP000001977">
    <property type="component" value="Chromosome"/>
</dbReference>
<dbReference type="GO" id="GO:0005886">
    <property type="term" value="C:plasma membrane"/>
    <property type="evidence" value="ECO:0007669"/>
    <property type="project" value="UniProtKB-SubCell"/>
</dbReference>
<dbReference type="GO" id="GO:0008495">
    <property type="term" value="F:protoheme IX farnesyltransferase activity"/>
    <property type="evidence" value="ECO:0007669"/>
    <property type="project" value="UniProtKB-UniRule"/>
</dbReference>
<dbReference type="GO" id="GO:0048034">
    <property type="term" value="P:heme O biosynthetic process"/>
    <property type="evidence" value="ECO:0007669"/>
    <property type="project" value="UniProtKB-UniRule"/>
</dbReference>
<dbReference type="CDD" id="cd13957">
    <property type="entry name" value="PT_UbiA_Cox10"/>
    <property type="match status" value="1"/>
</dbReference>
<dbReference type="Gene3D" id="1.10.357.140">
    <property type="entry name" value="UbiA prenyltransferase"/>
    <property type="match status" value="1"/>
</dbReference>
<dbReference type="Gene3D" id="1.20.120.1780">
    <property type="entry name" value="UbiA prenyltransferase"/>
    <property type="match status" value="1"/>
</dbReference>
<dbReference type="HAMAP" id="MF_00154">
    <property type="entry name" value="CyoE_CtaB"/>
    <property type="match status" value="1"/>
</dbReference>
<dbReference type="InterPro" id="IPR006369">
    <property type="entry name" value="Protohaem_IX_farnesylTrfase"/>
</dbReference>
<dbReference type="InterPro" id="IPR000537">
    <property type="entry name" value="UbiA_prenyltransferase"/>
</dbReference>
<dbReference type="InterPro" id="IPR030470">
    <property type="entry name" value="UbiA_prenylTrfase_CS"/>
</dbReference>
<dbReference type="InterPro" id="IPR044878">
    <property type="entry name" value="UbiA_sf"/>
</dbReference>
<dbReference type="NCBIfam" id="TIGR01473">
    <property type="entry name" value="cyoE_ctaB"/>
    <property type="match status" value="1"/>
</dbReference>
<dbReference type="NCBIfam" id="NF003349">
    <property type="entry name" value="PRK04375.1-2"/>
    <property type="match status" value="1"/>
</dbReference>
<dbReference type="PANTHER" id="PTHR43448:SF7">
    <property type="entry name" value="4-HYDROXYBENZOATE SOLANESYLTRANSFERASE"/>
    <property type="match status" value="1"/>
</dbReference>
<dbReference type="PANTHER" id="PTHR43448">
    <property type="entry name" value="PROTOHEME IX FARNESYLTRANSFERASE, MITOCHONDRIAL"/>
    <property type="match status" value="1"/>
</dbReference>
<dbReference type="Pfam" id="PF01040">
    <property type="entry name" value="UbiA"/>
    <property type="match status" value="1"/>
</dbReference>
<dbReference type="PROSITE" id="PS00943">
    <property type="entry name" value="UBIA"/>
    <property type="match status" value="1"/>
</dbReference>
<protein>
    <recommendedName>
        <fullName evidence="1">Protoheme IX farnesyltransferase</fullName>
        <ecNumber evidence="1">2.5.1.141</ecNumber>
    </recommendedName>
    <alternativeName>
        <fullName evidence="1">Heme B farnesyltransferase</fullName>
    </alternativeName>
    <alternativeName>
        <fullName evidence="1">Heme O synthase</fullName>
    </alternativeName>
</protein>
<comment type="function">
    <text evidence="1">Converts heme B (protoheme IX) to heme O by substitution of the vinyl group on carbon 2 of heme B porphyrin ring with a hydroxyethyl farnesyl side group.</text>
</comment>
<comment type="catalytic activity">
    <reaction evidence="1">
        <text>heme b + (2E,6E)-farnesyl diphosphate + H2O = Fe(II)-heme o + diphosphate</text>
        <dbReference type="Rhea" id="RHEA:28070"/>
        <dbReference type="ChEBI" id="CHEBI:15377"/>
        <dbReference type="ChEBI" id="CHEBI:33019"/>
        <dbReference type="ChEBI" id="CHEBI:60344"/>
        <dbReference type="ChEBI" id="CHEBI:60530"/>
        <dbReference type="ChEBI" id="CHEBI:175763"/>
        <dbReference type="EC" id="2.5.1.141"/>
    </reaction>
</comment>
<comment type="pathway">
    <text evidence="1">Porphyrin-containing compound metabolism; heme O biosynthesis; heme O from protoheme: step 1/1.</text>
</comment>
<comment type="subcellular location">
    <subcellularLocation>
        <location evidence="1">Cell inner membrane</location>
        <topology evidence="1">Multi-pass membrane protein</topology>
    </subcellularLocation>
</comment>
<comment type="miscellaneous">
    <text evidence="1">Carbon 2 of the heme B porphyrin ring is defined according to the Fischer nomenclature.</text>
</comment>
<comment type="similarity">
    <text evidence="1">Belongs to the UbiA prenyltransferase family. Protoheme IX farnesyltransferase subfamily.</text>
</comment>
<organism>
    <name type="scientific">Bordetella avium (strain 197N)</name>
    <dbReference type="NCBI Taxonomy" id="360910"/>
    <lineage>
        <taxon>Bacteria</taxon>
        <taxon>Pseudomonadati</taxon>
        <taxon>Pseudomonadota</taxon>
        <taxon>Betaproteobacteria</taxon>
        <taxon>Burkholderiales</taxon>
        <taxon>Alcaligenaceae</taxon>
        <taxon>Bordetella</taxon>
    </lineage>
</organism>
<sequence>MTSIAAPQPGLLRQYLVLTKPRVTQLAVFCAVIGMFLAVPGLPDLKRVLFGTIGIWLLAAAAFAINCLIEQEIDARMTRTARRGTARGTISPAQVLSLSGLLGGAGMLVLYHLVNPLTMWLTFATFVGYAVIYTVILKPRTPQNIVIGGLSGAMPPALGWASVANAVPAEAWVLVLIIFIWTPPHFWALALYRTEDYRKAGLPMLPITHGSKHTRLQIMLYSFALFAVTLLPYFMHMNGLLYLLAAVILGGIFVAHALRLYRSYSDERSRRLFRYSILYLALLFGALLVDHWVGVLSA</sequence>
<accession>Q2KTX0</accession>
<proteinExistence type="inferred from homology"/>
<gene>
    <name evidence="1" type="primary">ctaB</name>
    <name type="ordered locus">BAV3280</name>
</gene>